<dbReference type="EC" id="2.5.1.7" evidence="1"/>
<dbReference type="EMBL" id="AE005174">
    <property type="protein sequence ID" value="AAG58323.1"/>
    <property type="molecule type" value="Genomic_DNA"/>
</dbReference>
<dbReference type="EMBL" id="BA000007">
    <property type="protein sequence ID" value="BAB37491.1"/>
    <property type="molecule type" value="Genomic_DNA"/>
</dbReference>
<dbReference type="PIR" id="D91137">
    <property type="entry name" value="D91137"/>
</dbReference>
<dbReference type="PIR" id="G85982">
    <property type="entry name" value="G85982"/>
</dbReference>
<dbReference type="RefSeq" id="NP_312095.1">
    <property type="nucleotide sequence ID" value="NC_002695.1"/>
</dbReference>
<dbReference type="RefSeq" id="WP_000357265.1">
    <property type="nucleotide sequence ID" value="NZ_VOAI01000014.1"/>
</dbReference>
<dbReference type="SMR" id="Q8X9J9"/>
<dbReference type="STRING" id="155864.Z4552"/>
<dbReference type="GeneID" id="916085"/>
<dbReference type="KEGG" id="ece:Z4552"/>
<dbReference type="KEGG" id="ecs:ECs_4068"/>
<dbReference type="PATRIC" id="fig|386585.9.peg.4247"/>
<dbReference type="eggNOG" id="COG0766">
    <property type="taxonomic scope" value="Bacteria"/>
</dbReference>
<dbReference type="HOGENOM" id="CLU_027387_0_0_6"/>
<dbReference type="OMA" id="MIEIGSW"/>
<dbReference type="UniPathway" id="UPA00219"/>
<dbReference type="Proteomes" id="UP000000558">
    <property type="component" value="Chromosome"/>
</dbReference>
<dbReference type="Proteomes" id="UP000002519">
    <property type="component" value="Chromosome"/>
</dbReference>
<dbReference type="GO" id="GO:0005737">
    <property type="term" value="C:cytoplasm"/>
    <property type="evidence" value="ECO:0007669"/>
    <property type="project" value="UniProtKB-SubCell"/>
</dbReference>
<dbReference type="GO" id="GO:0008760">
    <property type="term" value="F:UDP-N-acetylglucosamine 1-carboxyvinyltransferase activity"/>
    <property type="evidence" value="ECO:0007669"/>
    <property type="project" value="UniProtKB-UniRule"/>
</dbReference>
<dbReference type="GO" id="GO:0051301">
    <property type="term" value="P:cell division"/>
    <property type="evidence" value="ECO:0007669"/>
    <property type="project" value="UniProtKB-KW"/>
</dbReference>
<dbReference type="GO" id="GO:0071555">
    <property type="term" value="P:cell wall organization"/>
    <property type="evidence" value="ECO:0007669"/>
    <property type="project" value="UniProtKB-KW"/>
</dbReference>
<dbReference type="GO" id="GO:0009252">
    <property type="term" value="P:peptidoglycan biosynthetic process"/>
    <property type="evidence" value="ECO:0007669"/>
    <property type="project" value="UniProtKB-UniRule"/>
</dbReference>
<dbReference type="GO" id="GO:0008360">
    <property type="term" value="P:regulation of cell shape"/>
    <property type="evidence" value="ECO:0007669"/>
    <property type="project" value="UniProtKB-KW"/>
</dbReference>
<dbReference type="GO" id="GO:0019277">
    <property type="term" value="P:UDP-N-acetylgalactosamine biosynthetic process"/>
    <property type="evidence" value="ECO:0007669"/>
    <property type="project" value="InterPro"/>
</dbReference>
<dbReference type="CDD" id="cd01555">
    <property type="entry name" value="UdpNAET"/>
    <property type="match status" value="1"/>
</dbReference>
<dbReference type="FunFam" id="3.65.10.10:FF:000002">
    <property type="entry name" value="UDP-N-acetylglucosamine 1-carboxyvinyltransferase"/>
    <property type="match status" value="1"/>
</dbReference>
<dbReference type="Gene3D" id="3.65.10.10">
    <property type="entry name" value="Enolpyruvate transferase domain"/>
    <property type="match status" value="2"/>
</dbReference>
<dbReference type="HAMAP" id="MF_00111">
    <property type="entry name" value="MurA"/>
    <property type="match status" value="1"/>
</dbReference>
<dbReference type="InterPro" id="IPR001986">
    <property type="entry name" value="Enolpyruvate_Tfrase_dom"/>
</dbReference>
<dbReference type="InterPro" id="IPR036968">
    <property type="entry name" value="Enolpyruvate_Tfrase_sf"/>
</dbReference>
<dbReference type="InterPro" id="IPR050068">
    <property type="entry name" value="MurA_subfamily"/>
</dbReference>
<dbReference type="InterPro" id="IPR013792">
    <property type="entry name" value="RNA3'P_cycl/enolpyr_Trfase_a/b"/>
</dbReference>
<dbReference type="InterPro" id="IPR005750">
    <property type="entry name" value="UDP_GlcNAc_COvinyl_MurA"/>
</dbReference>
<dbReference type="NCBIfam" id="TIGR01072">
    <property type="entry name" value="murA"/>
    <property type="match status" value="1"/>
</dbReference>
<dbReference type="NCBIfam" id="NF006873">
    <property type="entry name" value="PRK09369.1"/>
    <property type="match status" value="1"/>
</dbReference>
<dbReference type="PANTHER" id="PTHR43783">
    <property type="entry name" value="UDP-N-ACETYLGLUCOSAMINE 1-CARBOXYVINYLTRANSFERASE"/>
    <property type="match status" value="1"/>
</dbReference>
<dbReference type="PANTHER" id="PTHR43783:SF1">
    <property type="entry name" value="UDP-N-ACETYLGLUCOSAMINE 1-CARBOXYVINYLTRANSFERASE"/>
    <property type="match status" value="1"/>
</dbReference>
<dbReference type="Pfam" id="PF00275">
    <property type="entry name" value="EPSP_synthase"/>
    <property type="match status" value="1"/>
</dbReference>
<dbReference type="SUPFAM" id="SSF55205">
    <property type="entry name" value="EPT/RTPC-like"/>
    <property type="match status" value="1"/>
</dbReference>
<accession>Q8X9J9</accession>
<evidence type="ECO:0000255" key="1">
    <source>
        <dbReference type="HAMAP-Rule" id="MF_00111"/>
    </source>
</evidence>
<comment type="function">
    <text evidence="1">Cell wall formation. Adds enolpyruvyl to UDP-N-acetylglucosamine.</text>
</comment>
<comment type="catalytic activity">
    <reaction evidence="1">
        <text>phosphoenolpyruvate + UDP-N-acetyl-alpha-D-glucosamine = UDP-N-acetyl-3-O-(1-carboxyvinyl)-alpha-D-glucosamine + phosphate</text>
        <dbReference type="Rhea" id="RHEA:18681"/>
        <dbReference type="ChEBI" id="CHEBI:43474"/>
        <dbReference type="ChEBI" id="CHEBI:57705"/>
        <dbReference type="ChEBI" id="CHEBI:58702"/>
        <dbReference type="ChEBI" id="CHEBI:68483"/>
        <dbReference type="EC" id="2.5.1.7"/>
    </reaction>
</comment>
<comment type="pathway">
    <text evidence="1">Cell wall biogenesis; peptidoglycan biosynthesis.</text>
</comment>
<comment type="subcellular location">
    <subcellularLocation>
        <location evidence="1">Cytoplasm</location>
    </subcellularLocation>
</comment>
<comment type="similarity">
    <text evidence="1">Belongs to the EPSP synthase family. MurA subfamily.</text>
</comment>
<keyword id="KW-0131">Cell cycle</keyword>
<keyword id="KW-0132">Cell division</keyword>
<keyword id="KW-0133">Cell shape</keyword>
<keyword id="KW-0961">Cell wall biogenesis/degradation</keyword>
<keyword id="KW-0963">Cytoplasm</keyword>
<keyword id="KW-0573">Peptidoglycan synthesis</keyword>
<keyword id="KW-0670">Pyruvate</keyword>
<keyword id="KW-1185">Reference proteome</keyword>
<keyword id="KW-0808">Transferase</keyword>
<sequence length="419" mass="44848">MDKFRVQGPTKLQGEVTISGAKNAALPILFAALLAEEPVEIQNVPKLKDVDTSMKLLSQLGAKVERNGSVHIDARDVNVFCAPYDLVKTMRASIWALGPLVARFGQGQVSLPGGCTIGARPVDLHISGLEQLGATIKLEEGYVKASVDGRLKGAHIVMDKVSVGATVTIMCAATLAEGTTIIENAAREPEIVDTANFLITLGAKISGQGTDRIVIEGVERLGGGVYRVLPDRIETGTFLVAAAISRGKIICRNTQPDTLDAVLAKLRDAGADIEVGEDWISLDMHGKRPKAVNVRTAPHPAFPTDMQAQFTLLNLVAEGTGFITETVFENRFMHVPELSRMGAHAEIESNTVICHGVEKLSGAQVMATDLRASASLVLAGCIAEGTTVVDRIYHIDRGYERIEDKLRALGANIERVKGE</sequence>
<reference key="1">
    <citation type="journal article" date="2001" name="Nature">
        <title>Genome sequence of enterohaemorrhagic Escherichia coli O157:H7.</title>
        <authorList>
            <person name="Perna N.T."/>
            <person name="Plunkett G. III"/>
            <person name="Burland V."/>
            <person name="Mau B."/>
            <person name="Glasner J.D."/>
            <person name="Rose D.J."/>
            <person name="Mayhew G.F."/>
            <person name="Evans P.S."/>
            <person name="Gregor J."/>
            <person name="Kirkpatrick H.A."/>
            <person name="Posfai G."/>
            <person name="Hackett J."/>
            <person name="Klink S."/>
            <person name="Boutin A."/>
            <person name="Shao Y."/>
            <person name="Miller L."/>
            <person name="Grotbeck E.J."/>
            <person name="Davis N.W."/>
            <person name="Lim A."/>
            <person name="Dimalanta E.T."/>
            <person name="Potamousis K."/>
            <person name="Apodaca J."/>
            <person name="Anantharaman T.S."/>
            <person name="Lin J."/>
            <person name="Yen G."/>
            <person name="Schwartz D.C."/>
            <person name="Welch R.A."/>
            <person name="Blattner F.R."/>
        </authorList>
    </citation>
    <scope>NUCLEOTIDE SEQUENCE [LARGE SCALE GENOMIC DNA]</scope>
    <source>
        <strain>O157:H7 / EDL933 / ATCC 700927 / EHEC</strain>
    </source>
</reference>
<reference key="2">
    <citation type="journal article" date="2001" name="DNA Res.">
        <title>Complete genome sequence of enterohemorrhagic Escherichia coli O157:H7 and genomic comparison with a laboratory strain K-12.</title>
        <authorList>
            <person name="Hayashi T."/>
            <person name="Makino K."/>
            <person name="Ohnishi M."/>
            <person name="Kurokawa K."/>
            <person name="Ishii K."/>
            <person name="Yokoyama K."/>
            <person name="Han C.-G."/>
            <person name="Ohtsubo E."/>
            <person name="Nakayama K."/>
            <person name="Murata T."/>
            <person name="Tanaka M."/>
            <person name="Tobe T."/>
            <person name="Iida T."/>
            <person name="Takami H."/>
            <person name="Honda T."/>
            <person name="Sasakawa C."/>
            <person name="Ogasawara N."/>
            <person name="Yasunaga T."/>
            <person name="Kuhara S."/>
            <person name="Shiba T."/>
            <person name="Hattori M."/>
            <person name="Shinagawa H."/>
        </authorList>
    </citation>
    <scope>NUCLEOTIDE SEQUENCE [LARGE SCALE GENOMIC DNA]</scope>
    <source>
        <strain>O157:H7 / Sakai / RIMD 0509952 / EHEC</strain>
    </source>
</reference>
<proteinExistence type="inferred from homology"/>
<feature type="chain" id="PRO_0000178871" description="UDP-N-acetylglucosamine 1-carboxyvinyltransferase">
    <location>
        <begin position="1"/>
        <end position="419"/>
    </location>
</feature>
<feature type="active site" description="Proton donor" evidence="1">
    <location>
        <position position="115"/>
    </location>
</feature>
<feature type="binding site" evidence="1">
    <location>
        <begin position="22"/>
        <end position="23"/>
    </location>
    <ligand>
        <name>phosphoenolpyruvate</name>
        <dbReference type="ChEBI" id="CHEBI:58702"/>
    </ligand>
</feature>
<feature type="binding site" evidence="1">
    <location>
        <position position="91"/>
    </location>
    <ligand>
        <name>UDP-N-acetyl-alpha-D-glucosamine</name>
        <dbReference type="ChEBI" id="CHEBI:57705"/>
    </ligand>
</feature>
<feature type="binding site" evidence="1">
    <location>
        <begin position="120"/>
        <end position="124"/>
    </location>
    <ligand>
        <name>UDP-N-acetyl-alpha-D-glucosamine</name>
        <dbReference type="ChEBI" id="CHEBI:57705"/>
    </ligand>
</feature>
<feature type="binding site" evidence="1">
    <location>
        <begin position="160"/>
        <end position="163"/>
    </location>
    <ligand>
        <name>UDP-N-acetyl-alpha-D-glucosamine</name>
        <dbReference type="ChEBI" id="CHEBI:57705"/>
    </ligand>
</feature>
<feature type="binding site" evidence="1">
    <location>
        <position position="305"/>
    </location>
    <ligand>
        <name>UDP-N-acetyl-alpha-D-glucosamine</name>
        <dbReference type="ChEBI" id="CHEBI:57705"/>
    </ligand>
</feature>
<feature type="binding site" evidence="1">
    <location>
        <position position="327"/>
    </location>
    <ligand>
        <name>UDP-N-acetyl-alpha-D-glucosamine</name>
        <dbReference type="ChEBI" id="CHEBI:57705"/>
    </ligand>
</feature>
<feature type="modified residue" description="2-(S-cysteinyl)pyruvic acid O-phosphothioketal" evidence="1">
    <location>
        <position position="115"/>
    </location>
</feature>
<organism>
    <name type="scientific">Escherichia coli O157:H7</name>
    <dbReference type="NCBI Taxonomy" id="83334"/>
    <lineage>
        <taxon>Bacteria</taxon>
        <taxon>Pseudomonadati</taxon>
        <taxon>Pseudomonadota</taxon>
        <taxon>Gammaproteobacteria</taxon>
        <taxon>Enterobacterales</taxon>
        <taxon>Enterobacteriaceae</taxon>
        <taxon>Escherichia</taxon>
    </lineage>
</organism>
<name>MURA_ECO57</name>
<protein>
    <recommendedName>
        <fullName evidence="1">UDP-N-acetylglucosamine 1-carboxyvinyltransferase</fullName>
        <ecNumber evidence="1">2.5.1.7</ecNumber>
    </recommendedName>
    <alternativeName>
        <fullName evidence="1">Enoylpyruvate transferase</fullName>
    </alternativeName>
    <alternativeName>
        <fullName evidence="1">UDP-N-acetylglucosamine enolpyruvyl transferase</fullName>
        <shortName evidence="1">EPT</shortName>
    </alternativeName>
</protein>
<gene>
    <name evidence="1" type="primary">murA</name>
    <name type="ordered locus">Z4552</name>
    <name type="ordered locus">ECs4068</name>
</gene>